<evidence type="ECO:0000250" key="1"/>
<evidence type="ECO:0000255" key="2">
    <source>
        <dbReference type="PROSITE-ProRule" id="PRU10096"/>
    </source>
</evidence>
<evidence type="ECO:0000305" key="3"/>
<comment type="function">
    <text evidence="1">Endopeptidase that degrades small peptides of less than 7 kDa, such as glucagon and insulin.</text>
</comment>
<comment type="catalytic activity">
    <reaction evidence="2">
        <text>Preferential cleavage of 16-Tyr-|-Leu-17 and 25-Phe-|-Tyr-26 bonds of oxidized insulin B chain. Also acts on other substrates of Mw less than 7 kDa such as insulin and glucagon.</text>
        <dbReference type="EC" id="3.4.24.55"/>
    </reaction>
</comment>
<comment type="cofactor">
    <cofactor evidence="1">
        <name>Zn(2+)</name>
        <dbReference type="ChEBI" id="CHEBI:29105"/>
    </cofactor>
    <text evidence="1">Binds 1 zinc ion per subunit.</text>
</comment>
<comment type="subunit">
    <text evidence="1">Monomer.</text>
</comment>
<comment type="subcellular location">
    <subcellularLocation>
        <location evidence="1">Periplasm</location>
    </subcellularLocation>
</comment>
<comment type="similarity">
    <text evidence="3">Belongs to the peptidase M16 family.</text>
</comment>
<sequence>MPRSTWFKALLLFVALWAPLSQAETGWQPIQETIRKSDKDNRQYQAIRLDNGMVVLLVSDPQAVKSLSALVVPVGSLEDPEAYQGLAHYLEHMSLMGSKKYPQADSLAEYLKMHGGSHNASTAPYRTAFYLEVENDALPGAVDRLADAIAEPLLDKKYAERERNAVNAELTMARTRDGMRMAQVSAETINPAHPGSKFSGGNLETLSDKPGNPVQQALKDFHEKYYSANLMKAVIYSNKPLPELAKMAADTFGRVPNKESKKPEITVPVVTDAQKGIIIHYVPALPRKVLRVEFRIDNNSAKFRSKTDELITYLIGNRSPGTLSDWLQKQGLVEGISANSDPIVNGNSGVLAISASLTDKGLANRDQVVAAIFSYLNLLREKGIDKQYFDELANVLDIDFRYPSITRDMDYVEWLADTMIRVPVEHTLDAVNIADRYDAKAVKERLAMMTPQNARIWYISPKEPHNKTAYFVDAPYQVDKISAQTFADWQKKAADIALSLPELNPYIPDDFSLIKSEKKYDHPELIVDESNLRVVYAPSRYFASEPKADVSLILRNPKAMDSARNQVMFALNDYLAGLALDQLSNQASVGGISFSTNANNGLMINANGYTQRLPQLFQALLEGYFSYTATEEQLEQAKSWYNQMMDSAEKGKAFEQAIMPAQMLSQVPYFSRDERRKILPSITLKEVLAYRDALKSGARPEFMVIGNMTEAQATTLARDVQKQLGADGSEWCRNKDVVVDKKQSVIFEKAGNSTDSALAAVFVPTGYDEYTSSAYSSLLGQIVQPWFYNQLRTEEQLGYAVFAFPMSVGRQWGMGFLLQSNDKQPSFLWERYKAFFPTAEAKLRAMKPDEFAQIQQAVITQMLQAPQTLGEEASKLSKDFDRGNMRFDSRDKIVAQIKLLTPQKLADFFHQAVVEPQGMAILSQISGSQNGKAEYVHPEGWKVWENVSALQQTMPLMSEKNE</sequence>
<dbReference type="EC" id="3.4.24.55"/>
<dbReference type="EMBL" id="AE005674">
    <property type="protein sequence ID" value="AAN44319.1"/>
    <property type="molecule type" value="Genomic_DNA"/>
</dbReference>
<dbReference type="EMBL" id="AE014073">
    <property type="protein sequence ID" value="AAP18144.1"/>
    <property type="molecule type" value="Genomic_DNA"/>
</dbReference>
<dbReference type="RefSeq" id="NP_708612.1">
    <property type="nucleotide sequence ID" value="NC_004337.2"/>
</dbReference>
<dbReference type="RefSeq" id="WP_001138152.1">
    <property type="nucleotide sequence ID" value="NZ_WPGW01000008.1"/>
</dbReference>
<dbReference type="SMR" id="Q83QC3"/>
<dbReference type="STRING" id="198214.SF2832"/>
<dbReference type="MEROPS" id="M16.001"/>
<dbReference type="PaxDb" id="198214-SF2832"/>
<dbReference type="GeneID" id="1025819"/>
<dbReference type="KEGG" id="sfl:SF2832"/>
<dbReference type="KEGG" id="sfx:S3029"/>
<dbReference type="PATRIC" id="fig|198214.7.peg.3370"/>
<dbReference type="HOGENOM" id="CLU_004639_1_3_6"/>
<dbReference type="Proteomes" id="UP000001006">
    <property type="component" value="Chromosome"/>
</dbReference>
<dbReference type="Proteomes" id="UP000002673">
    <property type="component" value="Chromosome"/>
</dbReference>
<dbReference type="GO" id="GO:0005737">
    <property type="term" value="C:cytoplasm"/>
    <property type="evidence" value="ECO:0007669"/>
    <property type="project" value="UniProtKB-ARBA"/>
</dbReference>
<dbReference type="GO" id="GO:0042597">
    <property type="term" value="C:periplasmic space"/>
    <property type="evidence" value="ECO:0007669"/>
    <property type="project" value="UniProtKB-SubCell"/>
</dbReference>
<dbReference type="GO" id="GO:0046872">
    <property type="term" value="F:metal ion binding"/>
    <property type="evidence" value="ECO:0007669"/>
    <property type="project" value="UniProtKB-KW"/>
</dbReference>
<dbReference type="GO" id="GO:0004222">
    <property type="term" value="F:metalloendopeptidase activity"/>
    <property type="evidence" value="ECO:0007669"/>
    <property type="project" value="UniProtKB-EC"/>
</dbReference>
<dbReference type="GO" id="GO:0006508">
    <property type="term" value="P:proteolysis"/>
    <property type="evidence" value="ECO:0007669"/>
    <property type="project" value="UniProtKB-KW"/>
</dbReference>
<dbReference type="FunFam" id="3.30.830.10:FF:000012">
    <property type="entry name" value="Protease 3"/>
    <property type="match status" value="1"/>
</dbReference>
<dbReference type="Gene3D" id="3.30.830.10">
    <property type="entry name" value="Metalloenzyme, LuxS/M16 peptidase-like"/>
    <property type="match status" value="4"/>
</dbReference>
<dbReference type="InterPro" id="IPR011249">
    <property type="entry name" value="Metalloenz_LuxS/M16"/>
</dbReference>
<dbReference type="InterPro" id="IPR011765">
    <property type="entry name" value="Pept_M16_N"/>
</dbReference>
<dbReference type="InterPro" id="IPR001431">
    <property type="entry name" value="Pept_M16_Zn_BS"/>
</dbReference>
<dbReference type="InterPro" id="IPR050626">
    <property type="entry name" value="Peptidase_M16"/>
</dbReference>
<dbReference type="InterPro" id="IPR007863">
    <property type="entry name" value="Peptidase_M16_C"/>
</dbReference>
<dbReference type="InterPro" id="IPR032632">
    <property type="entry name" value="Peptidase_M16_M"/>
</dbReference>
<dbReference type="InterPro" id="IPR054734">
    <property type="entry name" value="PqqF-like_C_4"/>
</dbReference>
<dbReference type="NCBIfam" id="NF011681">
    <property type="entry name" value="PRK15101.1"/>
    <property type="match status" value="1"/>
</dbReference>
<dbReference type="PANTHER" id="PTHR43690:SF18">
    <property type="entry name" value="INSULIN-DEGRADING ENZYME-RELATED"/>
    <property type="match status" value="1"/>
</dbReference>
<dbReference type="PANTHER" id="PTHR43690">
    <property type="entry name" value="NARDILYSIN"/>
    <property type="match status" value="1"/>
</dbReference>
<dbReference type="Pfam" id="PF00675">
    <property type="entry name" value="Peptidase_M16"/>
    <property type="match status" value="1"/>
</dbReference>
<dbReference type="Pfam" id="PF05193">
    <property type="entry name" value="Peptidase_M16_C"/>
    <property type="match status" value="1"/>
</dbReference>
<dbReference type="Pfam" id="PF16187">
    <property type="entry name" value="Peptidase_M16_M"/>
    <property type="match status" value="1"/>
</dbReference>
<dbReference type="Pfam" id="PF22456">
    <property type="entry name" value="PqqF-like_C_4"/>
    <property type="match status" value="1"/>
</dbReference>
<dbReference type="SUPFAM" id="SSF63411">
    <property type="entry name" value="LuxS/MPP-like metallohydrolase"/>
    <property type="match status" value="4"/>
</dbReference>
<dbReference type="PROSITE" id="PS00143">
    <property type="entry name" value="INSULINASE"/>
    <property type="match status" value="1"/>
</dbReference>
<feature type="signal peptide" evidence="1">
    <location>
        <begin position="1"/>
        <end position="23"/>
    </location>
</feature>
<feature type="chain" id="PRO_0000026763" description="Protease 3">
    <location>
        <begin position="24"/>
        <end position="962"/>
    </location>
</feature>
<feature type="active site" description="Proton acceptor" evidence="2">
    <location>
        <position position="91"/>
    </location>
</feature>
<feature type="binding site" evidence="2">
    <location>
        <position position="88"/>
    </location>
    <ligand>
        <name>Zn(2+)</name>
        <dbReference type="ChEBI" id="CHEBI:29105"/>
    </ligand>
</feature>
<feature type="binding site" evidence="2">
    <location>
        <position position="92"/>
    </location>
    <ligand>
        <name>Zn(2+)</name>
        <dbReference type="ChEBI" id="CHEBI:29105"/>
    </ligand>
</feature>
<feature type="binding site" evidence="2">
    <location>
        <position position="169"/>
    </location>
    <ligand>
        <name>Zn(2+)</name>
        <dbReference type="ChEBI" id="CHEBI:29105"/>
    </ligand>
</feature>
<gene>
    <name type="primary">ptrA</name>
    <name type="synonym">ptr</name>
    <name type="ordered locus">SF2832</name>
    <name type="ordered locus">S3029</name>
</gene>
<keyword id="KW-0378">Hydrolase</keyword>
<keyword id="KW-0460">Magnesium</keyword>
<keyword id="KW-0479">Metal-binding</keyword>
<keyword id="KW-0482">Metalloprotease</keyword>
<keyword id="KW-0574">Periplasm</keyword>
<keyword id="KW-0645">Protease</keyword>
<keyword id="KW-1185">Reference proteome</keyword>
<keyword id="KW-0732">Signal</keyword>
<keyword id="KW-0862">Zinc</keyword>
<organism>
    <name type="scientific">Shigella flexneri</name>
    <dbReference type="NCBI Taxonomy" id="623"/>
    <lineage>
        <taxon>Bacteria</taxon>
        <taxon>Pseudomonadati</taxon>
        <taxon>Pseudomonadota</taxon>
        <taxon>Gammaproteobacteria</taxon>
        <taxon>Enterobacterales</taxon>
        <taxon>Enterobacteriaceae</taxon>
        <taxon>Shigella</taxon>
    </lineage>
</organism>
<protein>
    <recommendedName>
        <fullName>Protease 3</fullName>
        <ecNumber>3.4.24.55</ecNumber>
    </recommendedName>
    <alternativeName>
        <fullName>Pitrilysin</fullName>
    </alternativeName>
    <alternativeName>
        <fullName>Protease III</fullName>
    </alternativeName>
    <alternativeName>
        <fullName>Protease pi</fullName>
    </alternativeName>
</protein>
<accession>Q83QC3</accession>
<name>PTRA_SHIFL</name>
<proteinExistence type="inferred from homology"/>
<reference key="1">
    <citation type="journal article" date="2002" name="Nucleic Acids Res.">
        <title>Genome sequence of Shigella flexneri 2a: insights into pathogenicity through comparison with genomes of Escherichia coli K12 and O157.</title>
        <authorList>
            <person name="Jin Q."/>
            <person name="Yuan Z."/>
            <person name="Xu J."/>
            <person name="Wang Y."/>
            <person name="Shen Y."/>
            <person name="Lu W."/>
            <person name="Wang J."/>
            <person name="Liu H."/>
            <person name="Yang J."/>
            <person name="Yang F."/>
            <person name="Zhang X."/>
            <person name="Zhang J."/>
            <person name="Yang G."/>
            <person name="Wu H."/>
            <person name="Qu D."/>
            <person name="Dong J."/>
            <person name="Sun L."/>
            <person name="Xue Y."/>
            <person name="Zhao A."/>
            <person name="Gao Y."/>
            <person name="Zhu J."/>
            <person name="Kan B."/>
            <person name="Ding K."/>
            <person name="Chen S."/>
            <person name="Cheng H."/>
            <person name="Yao Z."/>
            <person name="He B."/>
            <person name="Chen R."/>
            <person name="Ma D."/>
            <person name="Qiang B."/>
            <person name="Wen Y."/>
            <person name="Hou Y."/>
            <person name="Yu J."/>
        </authorList>
    </citation>
    <scope>NUCLEOTIDE SEQUENCE [LARGE SCALE GENOMIC DNA]</scope>
    <source>
        <strain>301 / Serotype 2a</strain>
    </source>
</reference>
<reference key="2">
    <citation type="journal article" date="2003" name="Infect. Immun.">
        <title>Complete genome sequence and comparative genomics of Shigella flexneri serotype 2a strain 2457T.</title>
        <authorList>
            <person name="Wei J."/>
            <person name="Goldberg M.B."/>
            <person name="Burland V."/>
            <person name="Venkatesan M.M."/>
            <person name="Deng W."/>
            <person name="Fournier G."/>
            <person name="Mayhew G.F."/>
            <person name="Plunkett G. III"/>
            <person name="Rose D.J."/>
            <person name="Darling A."/>
            <person name="Mau B."/>
            <person name="Perna N.T."/>
            <person name="Payne S.M."/>
            <person name="Runyen-Janecky L.J."/>
            <person name="Zhou S."/>
            <person name="Schwartz D.C."/>
            <person name="Blattner F.R."/>
        </authorList>
    </citation>
    <scope>NUCLEOTIDE SEQUENCE [LARGE SCALE GENOMIC DNA]</scope>
    <source>
        <strain>ATCC 700930 / 2457T / Serotype 2a</strain>
    </source>
</reference>